<proteinExistence type="inferred from homology"/>
<reference key="1">
    <citation type="journal article" date="2007" name="J. Bacteriol.">
        <title>Whole-genome analysis of the methyl tert-butyl ether-degrading beta-proteobacterium Methylibium petroleiphilum PM1.</title>
        <authorList>
            <person name="Kane S.R."/>
            <person name="Chakicherla A.Y."/>
            <person name="Chain P.S.G."/>
            <person name="Schmidt R."/>
            <person name="Shin M.W."/>
            <person name="Legler T.C."/>
            <person name="Scow K.M."/>
            <person name="Larimer F.W."/>
            <person name="Lucas S.M."/>
            <person name="Richardson P.M."/>
            <person name="Hristova K.R."/>
        </authorList>
    </citation>
    <scope>NUCLEOTIDE SEQUENCE [LARGE SCALE GENOMIC DNA]</scope>
    <source>
        <strain>ATCC BAA-1232 / LMG 22953 / PM1</strain>
    </source>
</reference>
<name>RLMH_METPP</name>
<comment type="function">
    <text evidence="1">Specifically methylates the pseudouridine at position 1915 (m3Psi1915) in 23S rRNA.</text>
</comment>
<comment type="catalytic activity">
    <reaction evidence="1">
        <text>pseudouridine(1915) in 23S rRNA + S-adenosyl-L-methionine = N(3)-methylpseudouridine(1915) in 23S rRNA + S-adenosyl-L-homocysteine + H(+)</text>
        <dbReference type="Rhea" id="RHEA:42752"/>
        <dbReference type="Rhea" id="RHEA-COMP:10221"/>
        <dbReference type="Rhea" id="RHEA-COMP:10222"/>
        <dbReference type="ChEBI" id="CHEBI:15378"/>
        <dbReference type="ChEBI" id="CHEBI:57856"/>
        <dbReference type="ChEBI" id="CHEBI:59789"/>
        <dbReference type="ChEBI" id="CHEBI:65314"/>
        <dbReference type="ChEBI" id="CHEBI:74486"/>
        <dbReference type="EC" id="2.1.1.177"/>
    </reaction>
</comment>
<comment type="subunit">
    <text evidence="1">Homodimer.</text>
</comment>
<comment type="subcellular location">
    <subcellularLocation>
        <location evidence="1">Cytoplasm</location>
    </subcellularLocation>
</comment>
<comment type="similarity">
    <text evidence="1">Belongs to the RNA methyltransferase RlmH family.</text>
</comment>
<protein>
    <recommendedName>
        <fullName evidence="1">Ribosomal RNA large subunit methyltransferase H</fullName>
        <ecNumber evidence="1">2.1.1.177</ecNumber>
    </recommendedName>
    <alternativeName>
        <fullName evidence="1">23S rRNA (pseudouridine1915-N3)-methyltransferase</fullName>
    </alternativeName>
    <alternativeName>
        <fullName evidence="1">23S rRNA m3Psi1915 methyltransferase</fullName>
    </alternativeName>
    <alternativeName>
        <fullName evidence="1">rRNA (pseudouridine-N3-)-methyltransferase RlmH</fullName>
    </alternativeName>
</protein>
<accession>A2SFG5</accession>
<organism>
    <name type="scientific">Methylibium petroleiphilum (strain ATCC BAA-1232 / LMG 22953 / PM1)</name>
    <dbReference type="NCBI Taxonomy" id="420662"/>
    <lineage>
        <taxon>Bacteria</taxon>
        <taxon>Pseudomonadati</taxon>
        <taxon>Pseudomonadota</taxon>
        <taxon>Betaproteobacteria</taxon>
        <taxon>Burkholderiales</taxon>
        <taxon>Sphaerotilaceae</taxon>
        <taxon>Methylibium</taxon>
    </lineage>
</organism>
<sequence>MKLALVAVGQRLPAWAETACEDYLKRFPADWRVELKAVKAEPRTQGKTVDAMKAAEAQRIEAACARGVRRVVLDERGTRLTTQQLAQRLQAWQLDGRDVALLIGGPDGLADTLKDGADETLRLSDLTLPHAFARVLLAEALYRAWSVNAGHPYHRE</sequence>
<gene>
    <name evidence="1" type="primary">rlmH</name>
    <name type="ordered locus">Mpe_A1342</name>
</gene>
<dbReference type="EC" id="2.1.1.177" evidence="1"/>
<dbReference type="EMBL" id="CP000555">
    <property type="protein sequence ID" value="ABM94304.1"/>
    <property type="molecule type" value="Genomic_DNA"/>
</dbReference>
<dbReference type="RefSeq" id="WP_011828941.1">
    <property type="nucleotide sequence ID" value="NC_008825.1"/>
</dbReference>
<dbReference type="SMR" id="A2SFG5"/>
<dbReference type="STRING" id="420662.Mpe_A1342"/>
<dbReference type="KEGG" id="mpt:Mpe_A1342"/>
<dbReference type="eggNOG" id="COG1576">
    <property type="taxonomic scope" value="Bacteria"/>
</dbReference>
<dbReference type="HOGENOM" id="CLU_100552_1_0_4"/>
<dbReference type="Proteomes" id="UP000000366">
    <property type="component" value="Chromosome"/>
</dbReference>
<dbReference type="GO" id="GO:0005737">
    <property type="term" value="C:cytoplasm"/>
    <property type="evidence" value="ECO:0007669"/>
    <property type="project" value="UniProtKB-SubCell"/>
</dbReference>
<dbReference type="GO" id="GO:0070038">
    <property type="term" value="F:rRNA (pseudouridine-N3-)-methyltransferase activity"/>
    <property type="evidence" value="ECO:0007669"/>
    <property type="project" value="UniProtKB-UniRule"/>
</dbReference>
<dbReference type="CDD" id="cd18081">
    <property type="entry name" value="RlmH-like"/>
    <property type="match status" value="1"/>
</dbReference>
<dbReference type="Gene3D" id="3.40.1280.10">
    <property type="match status" value="1"/>
</dbReference>
<dbReference type="HAMAP" id="MF_00658">
    <property type="entry name" value="23SrRNA_methyltr_H"/>
    <property type="match status" value="1"/>
</dbReference>
<dbReference type="InterPro" id="IPR029028">
    <property type="entry name" value="Alpha/beta_knot_MTases"/>
</dbReference>
<dbReference type="InterPro" id="IPR003742">
    <property type="entry name" value="RlmH-like"/>
</dbReference>
<dbReference type="InterPro" id="IPR029026">
    <property type="entry name" value="tRNA_m1G_MTases_N"/>
</dbReference>
<dbReference type="NCBIfam" id="NF000986">
    <property type="entry name" value="PRK00103.1-4"/>
    <property type="match status" value="1"/>
</dbReference>
<dbReference type="NCBIfam" id="TIGR00246">
    <property type="entry name" value="tRNA_RlmH_YbeA"/>
    <property type="match status" value="1"/>
</dbReference>
<dbReference type="PANTHER" id="PTHR33603">
    <property type="entry name" value="METHYLTRANSFERASE"/>
    <property type="match status" value="1"/>
</dbReference>
<dbReference type="PANTHER" id="PTHR33603:SF1">
    <property type="entry name" value="RIBOSOMAL RNA LARGE SUBUNIT METHYLTRANSFERASE H"/>
    <property type="match status" value="1"/>
</dbReference>
<dbReference type="Pfam" id="PF02590">
    <property type="entry name" value="SPOUT_MTase"/>
    <property type="match status" value="1"/>
</dbReference>
<dbReference type="PIRSF" id="PIRSF004505">
    <property type="entry name" value="MT_bac"/>
    <property type="match status" value="1"/>
</dbReference>
<dbReference type="SUPFAM" id="SSF75217">
    <property type="entry name" value="alpha/beta knot"/>
    <property type="match status" value="1"/>
</dbReference>
<evidence type="ECO:0000255" key="1">
    <source>
        <dbReference type="HAMAP-Rule" id="MF_00658"/>
    </source>
</evidence>
<keyword id="KW-0963">Cytoplasm</keyword>
<keyword id="KW-0489">Methyltransferase</keyword>
<keyword id="KW-1185">Reference proteome</keyword>
<keyword id="KW-0698">rRNA processing</keyword>
<keyword id="KW-0949">S-adenosyl-L-methionine</keyword>
<keyword id="KW-0808">Transferase</keyword>
<feature type="chain" id="PRO_1000061808" description="Ribosomal RNA large subunit methyltransferase H">
    <location>
        <begin position="1"/>
        <end position="156"/>
    </location>
</feature>
<feature type="binding site" evidence="1">
    <location>
        <position position="73"/>
    </location>
    <ligand>
        <name>S-adenosyl-L-methionine</name>
        <dbReference type="ChEBI" id="CHEBI:59789"/>
    </ligand>
</feature>
<feature type="binding site" evidence="1">
    <location>
        <position position="104"/>
    </location>
    <ligand>
        <name>S-adenosyl-L-methionine</name>
        <dbReference type="ChEBI" id="CHEBI:59789"/>
    </ligand>
</feature>
<feature type="binding site" evidence="1">
    <location>
        <begin position="123"/>
        <end position="128"/>
    </location>
    <ligand>
        <name>S-adenosyl-L-methionine</name>
        <dbReference type="ChEBI" id="CHEBI:59789"/>
    </ligand>
</feature>